<reference key="1">
    <citation type="journal article" date="2004" name="Genome Res.">
        <title>The status, quality, and expansion of the NIH full-length cDNA project: the Mammalian Gene Collection (MGC).</title>
        <authorList>
            <consortium name="The MGC Project Team"/>
        </authorList>
    </citation>
    <scope>NUCLEOTIDE SEQUENCE [LARGE SCALE MRNA]</scope>
    <source>
        <tissue>Kidney</tissue>
        <tissue>Mammary gland</tissue>
    </source>
</reference>
<reference key="2">
    <citation type="journal article" date="2010" name="Cell">
        <title>A tissue-specific atlas of mouse protein phosphorylation and expression.</title>
        <authorList>
            <person name="Huttlin E.L."/>
            <person name="Jedrychowski M.P."/>
            <person name="Elias J.E."/>
            <person name="Goswami T."/>
            <person name="Rad R."/>
            <person name="Beausoleil S.A."/>
            <person name="Villen J."/>
            <person name="Haas W."/>
            <person name="Sowa M.E."/>
            <person name="Gygi S.P."/>
        </authorList>
    </citation>
    <scope>IDENTIFICATION BY MASS SPECTROMETRY [LARGE SCALE ANALYSIS]</scope>
    <source>
        <tissue>Brain</tissue>
        <tissue>Brown adipose tissue</tissue>
        <tissue>Kidney</tissue>
        <tissue>Pancreas</tissue>
        <tissue>Spleen</tissue>
        <tissue>Testis</tissue>
    </source>
</reference>
<reference key="3">
    <citation type="journal article" date="2010" name="Nat. Genet.">
        <title>Mutations in VIPAR cause an arthrogryposis, renal dysfunction and cholestasis syndrome phenotype with defects in epithelial polarization.</title>
        <authorList>
            <person name="Cullinane A.R."/>
            <person name="Straatman-Iwanowska A."/>
            <person name="Zaucker A."/>
            <person name="Wakabayashi Y."/>
            <person name="Bruce C.K."/>
            <person name="Luo G."/>
            <person name="Rahman F."/>
            <person name="Gurakan F."/>
            <person name="Utine E."/>
            <person name="Ozkan T.B."/>
            <person name="Denecke J."/>
            <person name="Vukovic J."/>
            <person name="Di Rocco M."/>
            <person name="Mandel H."/>
            <person name="Cangul H."/>
            <person name="Matthews R.P."/>
            <person name="Thomas S.G."/>
            <person name="Rappoport J.Z."/>
            <person name="Arias I.M."/>
            <person name="Wolburg H."/>
            <person name="Knisely A.S."/>
            <person name="Kelly D.A."/>
            <person name="Muller F."/>
            <person name="Maher E.R."/>
            <person name="Gissen P."/>
        </authorList>
    </citation>
    <scope>FUNCTION</scope>
    <scope>INTERACTION WITH RAB11A</scope>
    <scope>KNOCKDOWN</scope>
</reference>
<reference key="4">
    <citation type="journal article" date="2011" name="Mol. Biol. Cell">
        <title>Clathrin-dependent mechanisms modulate the subcellular distribution of class C Vps/HOPS tether subunits in polarized and nonpolarized cells.</title>
        <authorList>
            <person name="Zlatic S.A."/>
            <person name="Tornieri K."/>
            <person name="L'Hernault S.W."/>
            <person name="Faundez V."/>
        </authorList>
    </citation>
    <scope>SUBUNIT</scope>
</reference>
<reference key="5">
    <citation type="journal article" date="2015" name="Blood">
        <title>VPS33B regulates protein sorting into and maturation of alpha-granule progenitor organelles in mouse megakaryocytes.</title>
        <authorList>
            <person name="Bem D."/>
            <person name="Smith H."/>
            <person name="Banushi B."/>
            <person name="Burden J.J."/>
            <person name="White I.J."/>
            <person name="Hanley J."/>
            <person name="Jeremiah N."/>
            <person name="Rieux-Laucat F."/>
            <person name="Bettels R."/>
            <person name="Ariceta G."/>
            <person name="Mumford A.D."/>
            <person name="Thomas S.G."/>
            <person name="Watson S.P."/>
            <person name="Gissen P."/>
        </authorList>
    </citation>
    <scope>FUNCTION</scope>
    <scope>DISRUPTION PHENOTYPE</scope>
</reference>
<organism>
    <name type="scientific">Mus musculus</name>
    <name type="common">Mouse</name>
    <dbReference type="NCBI Taxonomy" id="10090"/>
    <lineage>
        <taxon>Eukaryota</taxon>
        <taxon>Metazoa</taxon>
        <taxon>Chordata</taxon>
        <taxon>Craniata</taxon>
        <taxon>Vertebrata</taxon>
        <taxon>Euteleostomi</taxon>
        <taxon>Mammalia</taxon>
        <taxon>Eutheria</taxon>
        <taxon>Euarchontoglires</taxon>
        <taxon>Glires</taxon>
        <taxon>Rodentia</taxon>
        <taxon>Myomorpha</taxon>
        <taxon>Muroidea</taxon>
        <taxon>Muridae</taxon>
        <taxon>Murinae</taxon>
        <taxon>Mus</taxon>
        <taxon>Mus</taxon>
    </lineage>
</organism>
<dbReference type="EMBL" id="BC028783">
    <property type="protein sequence ID" value="AAH28783.1"/>
    <property type="molecule type" value="mRNA"/>
</dbReference>
<dbReference type="EMBL" id="BC034170">
    <property type="protein sequence ID" value="AAH34170.1"/>
    <property type="molecule type" value="mRNA"/>
</dbReference>
<dbReference type="CCDS" id="CCDS39997.1"/>
<dbReference type="RefSeq" id="NP_835171.2">
    <property type="nucleotide sequence ID" value="NM_178070.5"/>
</dbReference>
<dbReference type="SMR" id="P59016"/>
<dbReference type="BioGRID" id="231409">
    <property type="interactions" value="9"/>
</dbReference>
<dbReference type="FunCoup" id="P59016">
    <property type="interactions" value="3205"/>
</dbReference>
<dbReference type="IntAct" id="P59016">
    <property type="interactions" value="1"/>
</dbReference>
<dbReference type="STRING" id="10090.ENSMUSP00000032749"/>
<dbReference type="GlyGen" id="P59016">
    <property type="glycosylation" value="1 site, 1 N-linked glycan (1 site)"/>
</dbReference>
<dbReference type="iPTMnet" id="P59016"/>
<dbReference type="PhosphoSitePlus" id="P59016"/>
<dbReference type="SwissPalm" id="P59016"/>
<dbReference type="PaxDb" id="10090-ENSMUSP00000032749"/>
<dbReference type="PeptideAtlas" id="P59016"/>
<dbReference type="ProteomicsDB" id="297611"/>
<dbReference type="Pumba" id="P59016"/>
<dbReference type="DNASU" id="233405"/>
<dbReference type="Ensembl" id="ENSMUST00000032749.12">
    <property type="protein sequence ID" value="ENSMUSP00000032749.6"/>
    <property type="gene ID" value="ENSMUSG00000030534.14"/>
</dbReference>
<dbReference type="GeneID" id="233405"/>
<dbReference type="KEGG" id="mmu:233405"/>
<dbReference type="UCSC" id="uc009iab.1">
    <property type="organism name" value="mouse"/>
</dbReference>
<dbReference type="AGR" id="MGI:2446237"/>
<dbReference type="CTD" id="26276"/>
<dbReference type="MGI" id="MGI:2446237">
    <property type="gene designation" value="Vps33b"/>
</dbReference>
<dbReference type="VEuPathDB" id="HostDB:ENSMUSG00000030534"/>
<dbReference type="eggNOG" id="KOG1302">
    <property type="taxonomic scope" value="Eukaryota"/>
</dbReference>
<dbReference type="GeneTree" id="ENSGT00940000156813"/>
<dbReference type="HOGENOM" id="CLU_016678_3_1_1"/>
<dbReference type="InParanoid" id="P59016"/>
<dbReference type="OMA" id="QVHIYMI"/>
<dbReference type="OrthoDB" id="10262528at2759"/>
<dbReference type="PhylomeDB" id="P59016"/>
<dbReference type="TreeFam" id="TF315126"/>
<dbReference type="BioGRID-ORCS" id="233405">
    <property type="hits" value="7 hits in 76 CRISPR screens"/>
</dbReference>
<dbReference type="ChiTaRS" id="Vps33b">
    <property type="organism name" value="mouse"/>
</dbReference>
<dbReference type="PRO" id="PR:P59016"/>
<dbReference type="Proteomes" id="UP000000589">
    <property type="component" value="Chromosome 7"/>
</dbReference>
<dbReference type="RNAct" id="P59016">
    <property type="molecule type" value="protein"/>
</dbReference>
<dbReference type="Bgee" id="ENSMUSG00000030534">
    <property type="expression patterns" value="Expressed in secondary oocyte and 205 other cell types or tissues"/>
</dbReference>
<dbReference type="ExpressionAtlas" id="P59016">
    <property type="expression patterns" value="baseline and differential"/>
</dbReference>
<dbReference type="GO" id="GO:0030136">
    <property type="term" value="C:clathrin-coated vesicle"/>
    <property type="evidence" value="ECO:0007669"/>
    <property type="project" value="UniProtKB-SubCell"/>
</dbReference>
<dbReference type="GO" id="GO:0031901">
    <property type="term" value="C:early endosome membrane"/>
    <property type="evidence" value="ECO:0007669"/>
    <property type="project" value="Ensembl"/>
</dbReference>
<dbReference type="GO" id="GO:0005794">
    <property type="term" value="C:Golgi apparatus"/>
    <property type="evidence" value="ECO:0000266"/>
    <property type="project" value="MGI"/>
</dbReference>
<dbReference type="GO" id="GO:0030897">
    <property type="term" value="C:HOPS complex"/>
    <property type="evidence" value="ECO:0007669"/>
    <property type="project" value="Ensembl"/>
</dbReference>
<dbReference type="GO" id="GO:0031902">
    <property type="term" value="C:late endosome membrane"/>
    <property type="evidence" value="ECO:0007669"/>
    <property type="project" value="UniProtKB-SubCell"/>
</dbReference>
<dbReference type="GO" id="GO:0005765">
    <property type="term" value="C:lysosomal membrane"/>
    <property type="evidence" value="ECO:0007669"/>
    <property type="project" value="UniProtKB-SubCell"/>
</dbReference>
<dbReference type="GO" id="GO:0048471">
    <property type="term" value="C:perinuclear region of cytoplasm"/>
    <property type="evidence" value="ECO:0007669"/>
    <property type="project" value="Ensembl"/>
</dbReference>
<dbReference type="GO" id="GO:0031091">
    <property type="term" value="C:platelet alpha granule"/>
    <property type="evidence" value="ECO:0007669"/>
    <property type="project" value="Ensembl"/>
</dbReference>
<dbReference type="GO" id="GO:0055037">
    <property type="term" value="C:recycling endosome"/>
    <property type="evidence" value="ECO:0007669"/>
    <property type="project" value="UniProtKB-SubCell"/>
</dbReference>
<dbReference type="GO" id="GO:0044877">
    <property type="term" value="F:protein-containing complex binding"/>
    <property type="evidence" value="ECO:0007669"/>
    <property type="project" value="Ensembl"/>
</dbReference>
<dbReference type="GO" id="GO:0030199">
    <property type="term" value="P:collagen fibril organization"/>
    <property type="evidence" value="ECO:0000315"/>
    <property type="project" value="MGI"/>
</dbReference>
<dbReference type="GO" id="GO:0032963">
    <property type="term" value="P:collagen metabolic process"/>
    <property type="evidence" value="ECO:0000315"/>
    <property type="project" value="MGI"/>
</dbReference>
<dbReference type="GO" id="GO:0007032">
    <property type="term" value="P:endosome organization"/>
    <property type="evidence" value="ECO:0007669"/>
    <property type="project" value="Ensembl"/>
</dbReference>
<dbReference type="GO" id="GO:0006886">
    <property type="term" value="P:intracellular protein transport"/>
    <property type="evidence" value="ECO:0000315"/>
    <property type="project" value="MGI"/>
</dbReference>
<dbReference type="GO" id="GO:0032418">
    <property type="term" value="P:lysosome localization"/>
    <property type="evidence" value="ECO:0007669"/>
    <property type="project" value="Ensembl"/>
</dbReference>
<dbReference type="GO" id="GO:0035855">
    <property type="term" value="P:megakaryocyte development"/>
    <property type="evidence" value="ECO:0000315"/>
    <property type="project" value="UniProtKB"/>
</dbReference>
<dbReference type="GO" id="GO:0032400">
    <property type="term" value="P:melanosome localization"/>
    <property type="evidence" value="ECO:0007669"/>
    <property type="project" value="Ensembl"/>
</dbReference>
<dbReference type="GO" id="GO:0061025">
    <property type="term" value="P:membrane fusion"/>
    <property type="evidence" value="ECO:0007669"/>
    <property type="project" value="Ensembl"/>
</dbReference>
<dbReference type="GO" id="GO:0070889">
    <property type="term" value="P:platelet alpha granule organization"/>
    <property type="evidence" value="ECO:0000315"/>
    <property type="project" value="UniProtKB"/>
</dbReference>
<dbReference type="GO" id="GO:0090330">
    <property type="term" value="P:regulation of platelet aggregation"/>
    <property type="evidence" value="ECO:0000315"/>
    <property type="project" value="UniProtKB"/>
</dbReference>
<dbReference type="GO" id="GO:0043589">
    <property type="term" value="P:skin morphogenesis"/>
    <property type="evidence" value="ECO:0007669"/>
    <property type="project" value="Ensembl"/>
</dbReference>
<dbReference type="GO" id="GO:0016192">
    <property type="term" value="P:vesicle-mediated transport"/>
    <property type="evidence" value="ECO:0000266"/>
    <property type="project" value="MGI"/>
</dbReference>
<dbReference type="FunFam" id="1.25.40.850:FF:000001">
    <property type="entry name" value="vacuolar protein sorting-associated protein 33B isoform X1"/>
    <property type="match status" value="1"/>
</dbReference>
<dbReference type="FunFam" id="3.40.50.2060:FF:000005">
    <property type="entry name" value="vacuolar protein sorting-associated protein 33B isoform X1"/>
    <property type="match status" value="1"/>
</dbReference>
<dbReference type="FunFam" id="3.90.830.10:FF:000004">
    <property type="entry name" value="vacuolar protein sorting-associated protein 33B isoform X1"/>
    <property type="match status" value="1"/>
</dbReference>
<dbReference type="FunFam" id="3.40.50.1910:FF:000003">
    <property type="entry name" value="vacuolar protein sorting-associated protein 33B isoform X2"/>
    <property type="match status" value="1"/>
</dbReference>
<dbReference type="Gene3D" id="1.25.40.850">
    <property type="match status" value="1"/>
</dbReference>
<dbReference type="Gene3D" id="3.40.50.1910">
    <property type="match status" value="1"/>
</dbReference>
<dbReference type="Gene3D" id="3.40.50.2060">
    <property type="match status" value="1"/>
</dbReference>
<dbReference type="Gene3D" id="3.90.830.10">
    <property type="entry name" value="Syntaxin Binding Protein 1, Chain A, domain 2"/>
    <property type="match status" value="1"/>
</dbReference>
<dbReference type="InterPro" id="IPR043154">
    <property type="entry name" value="Sec-1-like_dom1"/>
</dbReference>
<dbReference type="InterPro" id="IPR043127">
    <property type="entry name" value="Sec-1-like_dom3a"/>
</dbReference>
<dbReference type="InterPro" id="IPR001619">
    <property type="entry name" value="Sec1-like"/>
</dbReference>
<dbReference type="InterPro" id="IPR027482">
    <property type="entry name" value="Sec1-like_dom2"/>
</dbReference>
<dbReference type="InterPro" id="IPR036045">
    <property type="entry name" value="Sec1-like_sf"/>
</dbReference>
<dbReference type="InterPro" id="IPR043155">
    <property type="entry name" value="VPS33_dom3b"/>
</dbReference>
<dbReference type="PANTHER" id="PTHR11679">
    <property type="entry name" value="VESICLE PROTEIN SORTING-ASSOCIATED"/>
    <property type="match status" value="1"/>
</dbReference>
<dbReference type="Pfam" id="PF00995">
    <property type="entry name" value="Sec1"/>
    <property type="match status" value="1"/>
</dbReference>
<dbReference type="SUPFAM" id="SSF56815">
    <property type="entry name" value="Sec1/munc18-like (SM) proteins"/>
    <property type="match status" value="1"/>
</dbReference>
<feature type="initiator methionine" description="Removed" evidence="2">
    <location>
        <position position="1"/>
    </location>
</feature>
<feature type="chain" id="PRO_0000206306" description="Vacuolar protein sorting-associated protein 33B">
    <location>
        <begin position="2"/>
        <end position="617"/>
    </location>
</feature>
<feature type="modified residue" description="N-acetylalanine" evidence="2">
    <location>
        <position position="2"/>
    </location>
</feature>
<feature type="sequence conflict" description="In Ref. 1; AAH28783." evidence="6" ref="1">
    <original>LKV</original>
    <variation>ARG</variation>
    <location>
        <begin position="275"/>
        <end position="277"/>
    </location>
</feature>
<feature type="sequence conflict" description="In Ref. 1; AAH28783." evidence="6" ref="1">
    <original>R</original>
    <variation>W</variation>
    <location>
        <position position="315"/>
    </location>
</feature>
<proteinExistence type="evidence at protein level"/>
<protein>
    <recommendedName>
        <fullName>Vacuolar protein sorting-associated protein 33B</fullName>
    </recommendedName>
</protein>
<sequence>MAFPHRLDAPELPDFSMLKRLARDQLIYLLEQLPGKKDLFIEADLMSPLDRIANVSILKQHEVDKLYKVENKPALSANEQLCFLVRPRIKNMRYIASLVNADKLAGRIRKYKVILSPQKFYACEMVLEEEGVYGDVSCDEWAFSLLPLDVDLLSMELPEFFRDYFLEGDQRWINTVAQALHLLSTLYGPFPNCYGIGRCAKMSYDLWRKLEEEEDSETKGRKPEIGHIFLLDRDVDFVTALCSQVVYEGLVDDTFRIKCGSVDFGPEVTSSDKSLKVLLNAEDKVFSEIRNEHFSNVFGFLSQKARNLQAQYDRRRGMDIKQMKNFVSQELKGLKQEHRLLSLHIGACESIMKKKTKQDFQELIKTEHALLEGFNIRESTSYIEEHIDRQVSPIESLRLMCLLSITENGLIPKDYRSLKTQYLQSYGPEHLLTFSNLRRAGLLTEQAPGDTLTAVESKVSKLVTDKAAGKITDAFSSLAKRSNFRAISKKLNLIPRVDGEYDLKVPRDMAYVFSGAYVPLSCRIIEQVLDRRSWQGLDEVVRLLNCSEFAFTDTAKEDKASSESLRLILVVFLGGCTFSEISALRFLGREKGYRFIFLTTAVTNSARLMEAMSEVKS</sequence>
<name>VP33B_MOUSE</name>
<keyword id="KW-0007">Acetylation</keyword>
<keyword id="KW-0968">Cytoplasmic vesicle</keyword>
<keyword id="KW-0967">Endosome</keyword>
<keyword id="KW-0458">Lysosome</keyword>
<keyword id="KW-0472">Membrane</keyword>
<keyword id="KW-0597">Phosphoprotein</keyword>
<keyword id="KW-0653">Protein transport</keyword>
<keyword id="KW-1185">Reference proteome</keyword>
<keyword id="KW-0813">Transport</keyword>
<evidence type="ECO:0000250" key="1"/>
<evidence type="ECO:0000250" key="2">
    <source>
        <dbReference type="UniProtKB" id="Q9H267"/>
    </source>
</evidence>
<evidence type="ECO:0000269" key="3">
    <source>
    </source>
</evidence>
<evidence type="ECO:0000269" key="4">
    <source>
    </source>
</evidence>
<evidence type="ECO:0000269" key="5">
    <source>
    </source>
</evidence>
<evidence type="ECO:0000305" key="6"/>
<comment type="function">
    <text evidence="2 3 5">May play a role in vesicle-mediated protein trafficking to lysosomal compartments and in membrane docking/fusion reactions of late endosomes/lysosomes. Required for proper trafficking and targeting of the collagen-modifying enzyme lysyl hydroxylase 3 (LH3) to intracellular collagen (By similarity). Mediates phagolysosomal fusion in macrophages. Proposed to be involved in endosomal maturation implicating in part VIPAS39 (By similarity). In epithelial cells, the VPS33B:VIPAS39 complex may play a role in the apical RAB11A-dependentrecycling pathway and in the maintenance of the apical-basolateral polarity (PubMed:20190753). Seems to be involved in the sorting of specific cargos from the trans-Golgi network to alpha-granule-destined multivesicular bodies (MVBs) promoting MVBs maturation in megakaryocytes (PubMed:25947942).</text>
</comment>
<comment type="subunit">
    <text evidence="3 4">Interacts with RAB11A and VIPAS39 (PubMed:20190753). Associates with adapter protein complex 3 (AP-3), clathrin:AP-3 and clathrin:HGS complexes (PubMed:21411634).</text>
</comment>
<comment type="interaction">
    <interactant intactId="EBI-2656383">
        <id>P59016</id>
    </interactant>
    <interactant intactId="EBI-770256">
        <id>P62492</id>
        <label>Rab11a</label>
    </interactant>
    <organismsDiffer>false</organismsDiffer>
    <experiments>3</experiments>
</comment>
<comment type="subcellular location">
    <subcellularLocation>
        <location evidence="2">Late endosome membrane</location>
        <topology evidence="2">Peripheral membrane protein</topology>
        <orientation evidence="2">Cytoplasmic side</orientation>
    </subcellularLocation>
    <subcellularLocation>
        <location evidence="2">Lysosome membrane</location>
        <topology evidence="2">Peripheral membrane protein</topology>
        <orientation evidence="2">Cytoplasmic side</orientation>
    </subcellularLocation>
    <subcellularLocation>
        <location evidence="2">Early endosome</location>
    </subcellularLocation>
    <subcellularLocation>
        <location evidence="2">Cytoplasmic vesicle</location>
        <location evidence="2">Clathrin-coated vesicle</location>
    </subcellularLocation>
    <subcellularLocation>
        <location evidence="2">Recycling endosome</location>
    </subcellularLocation>
    <text evidence="2">Colocalizes in clusters with VIPAS39 at cytoplasmic organelles. Colocalizes with RAB11A and VIPAS39 on recycling endosomes. Colocalizes with AP-3, clathrin, Rab5 and Rab7b.</text>
</comment>
<comment type="PTM">
    <text evidence="1">Phosphorylated on tyrosine residues.</text>
</comment>
<comment type="disruption phenotype">
    <text evidence="5">Increased platelet account and deficiency in platelet alpha-granules associated with bleeding diathesis and decreases aggregate formation; reduction of mature ype-II multivesicular bodies (MVB II) in megakaryocytes.</text>
</comment>
<comment type="miscellaneous">
    <text>Vps33b-deficient inner medullary collecting duct cells display abnormal expression of membrane proteins such as Ceacam5, structural and functional tight junction defects and reduced E-cadherin expression.</text>
</comment>
<comment type="similarity">
    <text evidence="6">Belongs to the STXBP/unc-18/SEC1 family.</text>
</comment>
<gene>
    <name type="primary">Vps33b</name>
</gene>
<accession>P59016</accession>